<reference key="1">
    <citation type="journal article" date="2007" name="Photosyn. Res.">
        <title>Complete nucleotide sequence of the freshwater unicellular cyanobacterium Synechococcus elongatus PCC 6301 chromosome: gene content and organization.</title>
        <authorList>
            <person name="Sugita C."/>
            <person name="Ogata K."/>
            <person name="Shikata M."/>
            <person name="Jikuya H."/>
            <person name="Takano J."/>
            <person name="Furumichi M."/>
            <person name="Kanehisa M."/>
            <person name="Omata T."/>
            <person name="Sugiura M."/>
            <person name="Sugita M."/>
        </authorList>
    </citation>
    <scope>NUCLEOTIDE SEQUENCE [LARGE SCALE GENOMIC DNA]</scope>
    <source>
        <strain>ATCC 27144 / PCC 6301 / SAUG 1402/1</strain>
    </source>
</reference>
<accession>Q5N1M1</accession>
<protein>
    <recommendedName>
        <fullName evidence="3">Nucleoside diphosphate kinase</fullName>
        <shortName evidence="3">NDK</shortName>
        <shortName evidence="3">NDP kinase</shortName>
        <ecNumber evidence="3">2.7.4.6</ecNumber>
    </recommendedName>
    <alternativeName>
        <fullName evidence="3">Nucleoside-2-P kinase</fullName>
    </alternativeName>
</protein>
<feature type="chain" id="PRO_0000137062" description="Nucleoside diphosphate kinase">
    <location>
        <begin position="1"/>
        <end position="149"/>
    </location>
</feature>
<feature type="active site" description="Pros-phosphohistidine intermediate" evidence="3">
    <location>
        <position position="115"/>
    </location>
</feature>
<feature type="binding site" evidence="3">
    <location>
        <position position="9"/>
    </location>
    <ligand>
        <name>ATP</name>
        <dbReference type="ChEBI" id="CHEBI:30616"/>
    </ligand>
</feature>
<feature type="binding site" evidence="3">
    <location>
        <position position="57"/>
    </location>
    <ligand>
        <name>ATP</name>
        <dbReference type="ChEBI" id="CHEBI:30616"/>
    </ligand>
</feature>
<feature type="binding site" evidence="3">
    <location>
        <position position="85"/>
    </location>
    <ligand>
        <name>ATP</name>
        <dbReference type="ChEBI" id="CHEBI:30616"/>
    </ligand>
</feature>
<feature type="binding site" evidence="3">
    <location>
        <position position="91"/>
    </location>
    <ligand>
        <name>ATP</name>
        <dbReference type="ChEBI" id="CHEBI:30616"/>
    </ligand>
</feature>
<feature type="binding site" evidence="3">
    <location>
        <position position="102"/>
    </location>
    <ligand>
        <name>ATP</name>
        <dbReference type="ChEBI" id="CHEBI:30616"/>
    </ligand>
</feature>
<feature type="binding site" evidence="3">
    <location>
        <position position="112"/>
    </location>
    <ligand>
        <name>ATP</name>
        <dbReference type="ChEBI" id="CHEBI:30616"/>
    </ligand>
</feature>
<keyword id="KW-0067">ATP-binding</keyword>
<keyword id="KW-0963">Cytoplasm</keyword>
<keyword id="KW-0418">Kinase</keyword>
<keyword id="KW-0460">Magnesium</keyword>
<keyword id="KW-0479">Metal-binding</keyword>
<keyword id="KW-0546">Nucleotide metabolism</keyword>
<keyword id="KW-0547">Nucleotide-binding</keyword>
<keyword id="KW-0597">Phosphoprotein</keyword>
<keyword id="KW-0808">Transferase</keyword>
<comment type="function">
    <text evidence="3">Major role in the synthesis of nucleoside triphosphates other than ATP. The ATP gamma phosphate is transferred to the NDP beta phosphate via a ping-pong mechanism, using a phosphorylated active-site intermediate.</text>
</comment>
<comment type="function">
    <text evidence="1">(Microbial infection) Catalyzes the phosphorylation of dZDP to dZTP, when the bacterium is infected by a phage that produces the substrate for the synthesis of dZTP (2- amino-2'-deoxyadenosine 5'-triphosphate), which is then used by the phage as a DNA polymerase substrate.</text>
</comment>
<comment type="catalytic activity">
    <reaction evidence="2">
        <text>dZDP + ATP = dZTP + ADP</text>
        <dbReference type="Rhea" id="RHEA:67644"/>
        <dbReference type="ChEBI" id="CHEBI:30616"/>
        <dbReference type="ChEBI" id="CHEBI:172929"/>
        <dbReference type="ChEBI" id="CHEBI:172931"/>
        <dbReference type="ChEBI" id="CHEBI:456216"/>
    </reaction>
</comment>
<comment type="catalytic activity">
    <reaction evidence="3">
        <text>a 2'-deoxyribonucleoside 5'-diphosphate + ATP = a 2'-deoxyribonucleoside 5'-triphosphate + ADP</text>
        <dbReference type="Rhea" id="RHEA:44640"/>
        <dbReference type="ChEBI" id="CHEBI:30616"/>
        <dbReference type="ChEBI" id="CHEBI:61560"/>
        <dbReference type="ChEBI" id="CHEBI:73316"/>
        <dbReference type="ChEBI" id="CHEBI:456216"/>
        <dbReference type="EC" id="2.7.4.6"/>
    </reaction>
</comment>
<comment type="catalytic activity">
    <reaction evidence="3">
        <text>a ribonucleoside 5'-diphosphate + ATP = a ribonucleoside 5'-triphosphate + ADP</text>
        <dbReference type="Rhea" id="RHEA:18113"/>
        <dbReference type="ChEBI" id="CHEBI:30616"/>
        <dbReference type="ChEBI" id="CHEBI:57930"/>
        <dbReference type="ChEBI" id="CHEBI:61557"/>
        <dbReference type="ChEBI" id="CHEBI:456216"/>
        <dbReference type="EC" id="2.7.4.6"/>
    </reaction>
</comment>
<comment type="cofactor">
    <cofactor evidence="3">
        <name>Mg(2+)</name>
        <dbReference type="ChEBI" id="CHEBI:18420"/>
    </cofactor>
</comment>
<comment type="pathway">
    <text evidence="2">Purine metabolism.</text>
</comment>
<comment type="subunit">
    <text evidence="3">Homotetramer.</text>
</comment>
<comment type="subcellular location">
    <subcellularLocation>
        <location evidence="3">Cytoplasm</location>
    </subcellularLocation>
</comment>
<comment type="similarity">
    <text evidence="3">Belongs to the NDK family.</text>
</comment>
<comment type="sequence caution" evidence="4">
    <conflict type="erroneous initiation">
        <sequence resource="EMBL-CDS" id="BAD79799"/>
    </conflict>
</comment>
<dbReference type="EC" id="2.7.4.6" evidence="3"/>
<dbReference type="EMBL" id="AP008231">
    <property type="protein sequence ID" value="BAD79799.1"/>
    <property type="status" value="ALT_INIT"/>
    <property type="molecule type" value="Genomic_DNA"/>
</dbReference>
<dbReference type="SMR" id="Q5N1M1"/>
<dbReference type="KEGG" id="syc:syc1609_d"/>
<dbReference type="eggNOG" id="COG0105">
    <property type="taxonomic scope" value="Bacteria"/>
</dbReference>
<dbReference type="Proteomes" id="UP000001175">
    <property type="component" value="Chromosome"/>
</dbReference>
<dbReference type="GO" id="GO:0005737">
    <property type="term" value="C:cytoplasm"/>
    <property type="evidence" value="ECO:0007669"/>
    <property type="project" value="UniProtKB-SubCell"/>
</dbReference>
<dbReference type="GO" id="GO:0005524">
    <property type="term" value="F:ATP binding"/>
    <property type="evidence" value="ECO:0007669"/>
    <property type="project" value="UniProtKB-UniRule"/>
</dbReference>
<dbReference type="GO" id="GO:0046872">
    <property type="term" value="F:metal ion binding"/>
    <property type="evidence" value="ECO:0007669"/>
    <property type="project" value="UniProtKB-KW"/>
</dbReference>
<dbReference type="GO" id="GO:0004550">
    <property type="term" value="F:nucleoside diphosphate kinase activity"/>
    <property type="evidence" value="ECO:0007669"/>
    <property type="project" value="UniProtKB-UniRule"/>
</dbReference>
<dbReference type="GO" id="GO:0006241">
    <property type="term" value="P:CTP biosynthetic process"/>
    <property type="evidence" value="ECO:0007669"/>
    <property type="project" value="UniProtKB-UniRule"/>
</dbReference>
<dbReference type="GO" id="GO:0006183">
    <property type="term" value="P:GTP biosynthetic process"/>
    <property type="evidence" value="ECO:0007669"/>
    <property type="project" value="UniProtKB-UniRule"/>
</dbReference>
<dbReference type="GO" id="GO:0006228">
    <property type="term" value="P:UTP biosynthetic process"/>
    <property type="evidence" value="ECO:0007669"/>
    <property type="project" value="UniProtKB-UniRule"/>
</dbReference>
<dbReference type="CDD" id="cd04413">
    <property type="entry name" value="NDPk_I"/>
    <property type="match status" value="1"/>
</dbReference>
<dbReference type="FunFam" id="3.30.70.141:FF:000002">
    <property type="entry name" value="Nucleoside diphosphate kinase"/>
    <property type="match status" value="1"/>
</dbReference>
<dbReference type="Gene3D" id="3.30.70.141">
    <property type="entry name" value="Nucleoside diphosphate kinase-like domain"/>
    <property type="match status" value="1"/>
</dbReference>
<dbReference type="HAMAP" id="MF_00451">
    <property type="entry name" value="NDP_kinase"/>
    <property type="match status" value="1"/>
</dbReference>
<dbReference type="InterPro" id="IPR034907">
    <property type="entry name" value="NDK-like_dom"/>
</dbReference>
<dbReference type="InterPro" id="IPR036850">
    <property type="entry name" value="NDK-like_dom_sf"/>
</dbReference>
<dbReference type="InterPro" id="IPR001564">
    <property type="entry name" value="Nucleoside_diP_kinase"/>
</dbReference>
<dbReference type="InterPro" id="IPR023005">
    <property type="entry name" value="Nucleoside_diP_kinase_AS"/>
</dbReference>
<dbReference type="NCBIfam" id="NF001908">
    <property type="entry name" value="PRK00668.1"/>
    <property type="match status" value="1"/>
</dbReference>
<dbReference type="PANTHER" id="PTHR11349">
    <property type="entry name" value="NUCLEOSIDE DIPHOSPHATE KINASE"/>
    <property type="match status" value="1"/>
</dbReference>
<dbReference type="Pfam" id="PF00334">
    <property type="entry name" value="NDK"/>
    <property type="match status" value="1"/>
</dbReference>
<dbReference type="PRINTS" id="PR01243">
    <property type="entry name" value="NUCDPKINASE"/>
</dbReference>
<dbReference type="SMART" id="SM00562">
    <property type="entry name" value="NDK"/>
    <property type="match status" value="1"/>
</dbReference>
<dbReference type="SUPFAM" id="SSF54919">
    <property type="entry name" value="Nucleoside diphosphate kinase, NDK"/>
    <property type="match status" value="1"/>
</dbReference>
<dbReference type="PROSITE" id="PS00469">
    <property type="entry name" value="NDPK"/>
    <property type="match status" value="1"/>
</dbReference>
<dbReference type="PROSITE" id="PS51374">
    <property type="entry name" value="NDPK_LIKE"/>
    <property type="match status" value="1"/>
</dbReference>
<gene>
    <name evidence="3" type="primary">ndk</name>
    <name type="ordered locus">syc1609_d</name>
</gene>
<organism>
    <name type="scientific">Synechococcus sp. (strain ATCC 27144 / PCC 6301 / SAUG 1402/1)</name>
    <name type="common">Anacystis nidulans</name>
    <dbReference type="NCBI Taxonomy" id="269084"/>
    <lineage>
        <taxon>Bacteria</taxon>
        <taxon>Bacillati</taxon>
        <taxon>Cyanobacteriota</taxon>
        <taxon>Cyanophyceae</taxon>
        <taxon>Synechococcales</taxon>
        <taxon>Synechococcaceae</taxon>
        <taxon>Synechococcus</taxon>
    </lineage>
</organism>
<evidence type="ECO:0000250" key="1">
    <source>
        <dbReference type="UniProtKB" id="Q9KNM4"/>
    </source>
</evidence>
<evidence type="ECO:0000250" key="2">
    <source>
        <dbReference type="UniProtKB" id="Q9KTX4"/>
    </source>
</evidence>
<evidence type="ECO:0000255" key="3">
    <source>
        <dbReference type="HAMAP-Rule" id="MF_00451"/>
    </source>
</evidence>
<evidence type="ECO:0000305" key="4"/>
<name>NDK_SYNP6</name>
<proteinExistence type="inferred from homology"/>
<sequence>MERTFIAIKPDGVQRGLVGTIIGRFEQKGFKLVGLKQLKPSRELAEQHYAVHRERPFFNGLVEFITSGPIVAIVLEGEGVVAAARKLIGATNPLTAEPGTIRGDFGVNIGRNIIHGSDAIETAQQEIALWFSPAELSDWTPTIQPWLYE</sequence>